<gene>
    <name type="primary">HSP90B1</name>
    <name evidence="3" type="synonym">HSPC4</name>
    <name type="ORF">QflA-11385</name>
</gene>
<accession>Q4R520</accession>
<protein>
    <recommendedName>
        <fullName>Endoplasmin</fullName>
        <ecNumber evidence="4">3.6.4.-</ecNumber>
    </recommendedName>
    <alternativeName>
        <fullName>Heat shock protein 90 kDa beta member 1</fullName>
    </alternativeName>
</protein>
<evidence type="ECO:0000250" key="1"/>
<evidence type="ECO:0000250" key="2">
    <source>
        <dbReference type="UniProtKB" id="P08113"/>
    </source>
</evidence>
<evidence type="ECO:0000250" key="3">
    <source>
        <dbReference type="UniProtKB" id="P14625"/>
    </source>
</evidence>
<evidence type="ECO:0000250" key="4">
    <source>
        <dbReference type="UniProtKB" id="P41148"/>
    </source>
</evidence>
<evidence type="ECO:0000250" key="5">
    <source>
        <dbReference type="UniProtKB" id="Q66HD0"/>
    </source>
</evidence>
<evidence type="ECO:0000255" key="6"/>
<evidence type="ECO:0000256" key="7">
    <source>
        <dbReference type="SAM" id="MobiDB-lite"/>
    </source>
</evidence>
<evidence type="ECO:0000305" key="8"/>
<reference key="1">
    <citation type="submission" date="2005-06" db="EMBL/GenBank/DDBJ databases">
        <title>DNA sequences of macaque genes expressed in brain or testis and its evolutionary implications.</title>
        <authorList>
            <consortium name="International consortium for macaque cDNA sequencing and analysis"/>
        </authorList>
    </citation>
    <scope>NUCLEOTIDE SEQUENCE [LARGE SCALE MRNA]</scope>
    <source>
        <tissue>Frontal cortex</tissue>
    </source>
</reference>
<feature type="signal peptide" evidence="1">
    <location>
        <begin position="1"/>
        <end position="21"/>
    </location>
</feature>
<feature type="chain" id="PRO_0000233904" description="Endoplasmin">
    <location>
        <begin position="22"/>
        <end position="804"/>
    </location>
</feature>
<feature type="region of interest" description="Disordered" evidence="7">
    <location>
        <begin position="288"/>
        <end position="323"/>
    </location>
</feature>
<feature type="region of interest" description="Disordered" evidence="7">
    <location>
        <begin position="750"/>
        <end position="804"/>
    </location>
</feature>
<feature type="short sequence motif" description="SRT pseudosubstrate motif" evidence="3">
    <location>
        <begin position="42"/>
        <end position="44"/>
    </location>
</feature>
<feature type="short sequence motif" description="Prevents secretion from ER" evidence="1">
    <location>
        <begin position="801"/>
        <end position="804"/>
    </location>
</feature>
<feature type="compositionally biased region" description="Acidic residues" evidence="7">
    <location>
        <begin position="289"/>
        <end position="317"/>
    </location>
</feature>
<feature type="compositionally biased region" description="Acidic residues" evidence="7">
    <location>
        <begin position="757"/>
        <end position="791"/>
    </location>
</feature>
<feature type="compositionally biased region" description="Basic and acidic residues" evidence="7">
    <location>
        <begin position="792"/>
        <end position="804"/>
    </location>
</feature>
<feature type="binding site" evidence="4">
    <location>
        <position position="107"/>
    </location>
    <ligand>
        <name>ATP</name>
        <dbReference type="ChEBI" id="CHEBI:30616"/>
    </ligand>
</feature>
<feature type="binding site" evidence="4">
    <location>
        <position position="149"/>
    </location>
    <ligand>
        <name>ATP</name>
        <dbReference type="ChEBI" id="CHEBI:30616"/>
    </ligand>
</feature>
<feature type="binding site" evidence="4">
    <location>
        <position position="162"/>
    </location>
    <ligand>
        <name>ATP</name>
        <dbReference type="ChEBI" id="CHEBI:30616"/>
    </ligand>
</feature>
<feature type="binding site" evidence="4">
    <location>
        <position position="199"/>
    </location>
    <ligand>
        <name>ATP</name>
        <dbReference type="ChEBI" id="CHEBI:30616"/>
    </ligand>
</feature>
<feature type="site" description="Important for ATP hydrolysis" evidence="4">
    <location>
        <position position="448"/>
    </location>
</feature>
<feature type="modified residue" description="Phosphoserine" evidence="3">
    <location>
        <position position="64"/>
    </location>
</feature>
<feature type="modified residue" description="N6-(2-hydroxyisobutyryl)lysine" evidence="3">
    <location>
        <position position="168"/>
    </location>
</feature>
<feature type="modified residue" description="Phosphoserine" evidence="5">
    <location>
        <position position="172"/>
    </location>
</feature>
<feature type="modified residue" description="Phosphoserine" evidence="3">
    <location>
        <position position="306"/>
    </location>
</feature>
<feature type="modified residue" description="Phosphoserine" evidence="5">
    <location>
        <position position="403"/>
    </location>
</feature>
<feature type="modified residue" description="N6-succinyllysine" evidence="2">
    <location>
        <position position="404"/>
    </location>
</feature>
<feature type="modified residue" description="Phosphoserine" evidence="3">
    <location>
        <position position="447"/>
    </location>
</feature>
<feature type="modified residue" description="N6-acetyllysine" evidence="2">
    <location>
        <position position="479"/>
    </location>
</feature>
<feature type="modified residue" description="N6-succinyllysine" evidence="2">
    <location>
        <position position="633"/>
    </location>
</feature>
<feature type="modified residue" description="Phosphothreonine" evidence="3">
    <location>
        <position position="786"/>
    </location>
</feature>
<feature type="glycosylation site" description="N-linked (GlcNAc...) asparagine" evidence="6">
    <location>
        <position position="62"/>
    </location>
</feature>
<feature type="glycosylation site" description="N-linked (GlcNAc...) asparagine" evidence="6">
    <location>
        <position position="107"/>
    </location>
</feature>
<feature type="glycosylation site" description="N-linked (GlcNAc...) asparagine" evidence="6">
    <location>
        <position position="217"/>
    </location>
</feature>
<feature type="glycosylation site" description="N-linked (GlcNAc...) asparagine" evidence="6">
    <location>
        <position position="445"/>
    </location>
</feature>
<feature type="glycosylation site" description="N-linked (GlcNAc...) asparagine" evidence="6">
    <location>
        <position position="481"/>
    </location>
</feature>
<feature type="glycosylation site" description="N-linked (GlcNAc...) asparagine" evidence="6">
    <location>
        <position position="502"/>
    </location>
</feature>
<feature type="disulfide bond" description="Interchain" evidence="2">
    <location>
        <position position="138"/>
    </location>
</feature>
<keyword id="KW-0007">Acetylation</keyword>
<keyword id="KW-0067">ATP-binding</keyword>
<keyword id="KW-0106">Calcium</keyword>
<keyword id="KW-0143">Chaperone</keyword>
<keyword id="KW-1015">Disulfide bond</keyword>
<keyword id="KW-0256">Endoplasmic reticulum</keyword>
<keyword id="KW-0325">Glycoprotein</keyword>
<keyword id="KW-0378">Hydrolase</keyword>
<keyword id="KW-0379">Hydroxylation</keyword>
<keyword id="KW-0547">Nucleotide-binding</keyword>
<keyword id="KW-0597">Phosphoprotein</keyword>
<keyword id="KW-1185">Reference proteome</keyword>
<keyword id="KW-0703">Sarcoplasmic reticulum</keyword>
<keyword id="KW-0732">Signal</keyword>
<proteinExistence type="evidence at transcript level"/>
<dbReference type="EC" id="3.6.4.-" evidence="4"/>
<dbReference type="EMBL" id="AB169724">
    <property type="protein sequence ID" value="BAE01805.1"/>
    <property type="molecule type" value="mRNA"/>
</dbReference>
<dbReference type="RefSeq" id="NP_001270655.1">
    <property type="nucleotide sequence ID" value="NM_001283726.1"/>
</dbReference>
<dbReference type="RefSeq" id="XP_045221737.1">
    <property type="nucleotide sequence ID" value="XM_045365802.2"/>
</dbReference>
<dbReference type="SMR" id="Q4R520"/>
<dbReference type="STRING" id="9541.ENSMFAP00000032087"/>
<dbReference type="GlyCosmos" id="Q4R520">
    <property type="glycosylation" value="6 sites, No reported glycans"/>
</dbReference>
<dbReference type="GeneID" id="101926487"/>
<dbReference type="VEuPathDB" id="HostDB:ENSMFAG00000036813"/>
<dbReference type="eggNOG" id="KOG0020">
    <property type="taxonomic scope" value="Eukaryota"/>
</dbReference>
<dbReference type="Proteomes" id="UP000233100">
    <property type="component" value="Chromosome 11"/>
</dbReference>
<dbReference type="GO" id="GO:0042470">
    <property type="term" value="C:melanosome"/>
    <property type="evidence" value="ECO:0007669"/>
    <property type="project" value="UniProtKB-SubCell"/>
</dbReference>
<dbReference type="GO" id="GO:0033018">
    <property type="term" value="C:sarcoplasmic reticulum lumen"/>
    <property type="evidence" value="ECO:0007669"/>
    <property type="project" value="UniProtKB-SubCell"/>
</dbReference>
<dbReference type="GO" id="GO:0005524">
    <property type="term" value="F:ATP binding"/>
    <property type="evidence" value="ECO:0007669"/>
    <property type="project" value="UniProtKB-KW"/>
</dbReference>
<dbReference type="GO" id="GO:0016887">
    <property type="term" value="F:ATP hydrolysis activity"/>
    <property type="evidence" value="ECO:0007669"/>
    <property type="project" value="InterPro"/>
</dbReference>
<dbReference type="GO" id="GO:0140662">
    <property type="term" value="F:ATP-dependent protein folding chaperone"/>
    <property type="evidence" value="ECO:0007669"/>
    <property type="project" value="InterPro"/>
</dbReference>
<dbReference type="GO" id="GO:0051082">
    <property type="term" value="F:unfolded protein binding"/>
    <property type="evidence" value="ECO:0007669"/>
    <property type="project" value="InterPro"/>
</dbReference>
<dbReference type="GO" id="GO:0036503">
    <property type="term" value="P:ERAD pathway"/>
    <property type="evidence" value="ECO:0000250"/>
    <property type="project" value="UniProtKB"/>
</dbReference>
<dbReference type="CDD" id="cd16927">
    <property type="entry name" value="HATPase_Hsp90-like"/>
    <property type="match status" value="1"/>
</dbReference>
<dbReference type="FunFam" id="3.30.230.80:FF:000003">
    <property type="entry name" value="endoplasmin isoform X1"/>
    <property type="match status" value="1"/>
</dbReference>
<dbReference type="FunFam" id="1.20.120.790:FF:000003">
    <property type="entry name" value="Heat shock protein 90"/>
    <property type="match status" value="1"/>
</dbReference>
<dbReference type="FunFam" id="3.30.565.10:FF:000005">
    <property type="entry name" value="Heat shock protein 90"/>
    <property type="match status" value="1"/>
</dbReference>
<dbReference type="FunFam" id="3.40.50.11260:FF:000003">
    <property type="entry name" value="Heat shock protein 90"/>
    <property type="match status" value="1"/>
</dbReference>
<dbReference type="Gene3D" id="3.30.230.80">
    <property type="match status" value="1"/>
</dbReference>
<dbReference type="Gene3D" id="3.40.50.11260">
    <property type="match status" value="1"/>
</dbReference>
<dbReference type="Gene3D" id="1.20.120.790">
    <property type="entry name" value="Heat shock protein 90, C-terminal domain"/>
    <property type="match status" value="1"/>
</dbReference>
<dbReference type="Gene3D" id="3.30.565.10">
    <property type="entry name" value="Histidine kinase-like ATPase, C-terminal domain"/>
    <property type="match status" value="1"/>
</dbReference>
<dbReference type="HAMAP" id="MF_00505">
    <property type="entry name" value="HSP90"/>
    <property type="match status" value="1"/>
</dbReference>
<dbReference type="InterPro" id="IPR036890">
    <property type="entry name" value="HATPase_C_sf"/>
</dbReference>
<dbReference type="InterPro" id="IPR019805">
    <property type="entry name" value="Heat_shock_protein_90_CS"/>
</dbReference>
<dbReference type="InterPro" id="IPR037196">
    <property type="entry name" value="HSP90_C"/>
</dbReference>
<dbReference type="InterPro" id="IPR001404">
    <property type="entry name" value="Hsp90_fam"/>
</dbReference>
<dbReference type="InterPro" id="IPR020575">
    <property type="entry name" value="Hsp90_N"/>
</dbReference>
<dbReference type="InterPro" id="IPR020568">
    <property type="entry name" value="Ribosomal_Su5_D2-typ_SF"/>
</dbReference>
<dbReference type="NCBIfam" id="NF003555">
    <property type="entry name" value="PRK05218.1"/>
    <property type="match status" value="1"/>
</dbReference>
<dbReference type="PANTHER" id="PTHR11528">
    <property type="entry name" value="HEAT SHOCK PROTEIN 90 FAMILY MEMBER"/>
    <property type="match status" value="1"/>
</dbReference>
<dbReference type="Pfam" id="PF13589">
    <property type="entry name" value="HATPase_c_3"/>
    <property type="match status" value="1"/>
</dbReference>
<dbReference type="Pfam" id="PF00183">
    <property type="entry name" value="HSP90"/>
    <property type="match status" value="1"/>
</dbReference>
<dbReference type="PIRSF" id="PIRSF002583">
    <property type="entry name" value="Hsp90"/>
    <property type="match status" value="1"/>
</dbReference>
<dbReference type="PRINTS" id="PR00775">
    <property type="entry name" value="HEATSHOCK90"/>
</dbReference>
<dbReference type="SMART" id="SM00387">
    <property type="entry name" value="HATPase_c"/>
    <property type="match status" value="1"/>
</dbReference>
<dbReference type="SUPFAM" id="SSF55874">
    <property type="entry name" value="ATPase domain of HSP90 chaperone/DNA topoisomerase II/histidine kinase"/>
    <property type="match status" value="1"/>
</dbReference>
<dbReference type="SUPFAM" id="SSF110942">
    <property type="entry name" value="HSP90 C-terminal domain"/>
    <property type="match status" value="1"/>
</dbReference>
<dbReference type="SUPFAM" id="SSF54211">
    <property type="entry name" value="Ribosomal protein S5 domain 2-like"/>
    <property type="match status" value="1"/>
</dbReference>
<dbReference type="PROSITE" id="PS00014">
    <property type="entry name" value="ER_TARGET"/>
    <property type="match status" value="1"/>
</dbReference>
<dbReference type="PROSITE" id="PS00298">
    <property type="entry name" value="HSP90"/>
    <property type="match status" value="1"/>
</dbReference>
<organism>
    <name type="scientific">Macaca fascicularis</name>
    <name type="common">Crab-eating macaque</name>
    <name type="synonym">Cynomolgus monkey</name>
    <dbReference type="NCBI Taxonomy" id="9541"/>
    <lineage>
        <taxon>Eukaryota</taxon>
        <taxon>Metazoa</taxon>
        <taxon>Chordata</taxon>
        <taxon>Craniata</taxon>
        <taxon>Vertebrata</taxon>
        <taxon>Euteleostomi</taxon>
        <taxon>Mammalia</taxon>
        <taxon>Eutheria</taxon>
        <taxon>Euarchontoglires</taxon>
        <taxon>Primates</taxon>
        <taxon>Haplorrhini</taxon>
        <taxon>Catarrhini</taxon>
        <taxon>Cercopithecidae</taxon>
        <taxon>Cercopithecinae</taxon>
        <taxon>Macaca</taxon>
    </lineage>
</organism>
<comment type="function">
    <text evidence="2 3">ATP-dependent chaperone involved in the processing of proteins in the endoplasmic reticulum, regulating their transport. Together with MESD, acts as a modulator of the Wnt pathway by promoting the folding of LRP6, a coreceptor of the canonical Wnt pathway (By similarity). When associated with CNPY3, required for proper folding of Toll-like receptors (By similarity). Promotes folding and trafficking of TLR4 to the cell surface. May participate in the unfolding of cytosolic leaderless cargos (lacking the secretion signal sequence) such as the interleukin 1/IL-1 to facilitate their translocation into the ERGIC (endoplasmic reticulum-Golgi intermediate compartment) and secretion; the translocation process is mediated by the cargo receptor TMED10 (By similarity).</text>
</comment>
<comment type="catalytic activity">
    <reaction evidence="4">
        <text>ATP + H2O = ADP + phosphate + H(+)</text>
        <dbReference type="Rhea" id="RHEA:13065"/>
        <dbReference type="ChEBI" id="CHEBI:15377"/>
        <dbReference type="ChEBI" id="CHEBI:15378"/>
        <dbReference type="ChEBI" id="CHEBI:30616"/>
        <dbReference type="ChEBI" id="CHEBI:43474"/>
        <dbReference type="ChEBI" id="CHEBI:456216"/>
    </reaction>
    <physiologicalReaction direction="left-to-right" evidence="4">
        <dbReference type="Rhea" id="RHEA:13066"/>
    </physiologicalReaction>
</comment>
<comment type="subunit">
    <text evidence="2 3">Homodimer; disulfide-linked. Component of an EIF2 complex at least composed of CELF1/CUGBP1, CALR, CALR3, EIF2S1, EIF2S2, HSP90B1 and HSPA5 (By similarity). Part of a large chaperone multiprotein complex comprising DNAJB11, HSP90B1, HSPA5, HYOU, PDIA2, PDIA4, PDIA6, PPIB, SDF2L1, UGGT1 and very small amounts of ERP29, but not, or at very low levels, CALR nor CANX. Interacts with AIMP1; regulates its retention in the endoplasmic reticulum. Hyperglycosylated form interacts with OS9; promoting its degradation by the endoplasmic reticulum associated degradation (ERAD) (By similarity). Interacts with CNPY3. This interaction is disrupted in the presence of ATP (By similarity). Interacts with TLR4 and TLR9, but not with TLR3 (By similarity). Interacts with MZB1 in a calcium-dependent manner (By similarity). Interacts with METTL23. Interacts with IL1B; the interaction facilitates cargo translocation into the ERGIC. Interacts with EIF2AK3 (By similarity).</text>
</comment>
<comment type="subcellular location">
    <subcellularLocation>
        <location evidence="3">Endoplasmic reticulum lumen</location>
    </subcellularLocation>
    <subcellularLocation>
        <location evidence="4">Sarcoplasmic reticulum lumen</location>
    </subcellularLocation>
    <subcellularLocation>
        <location evidence="3">Melanosome</location>
    </subcellularLocation>
</comment>
<comment type="domain">
    <text evidence="3">The SRT pseudosubstrate motif associates with STT3A during translation in normal conditions, preventing glycosylation of facultative sites until HSP90B1 folding is completed.</text>
</comment>
<comment type="PTM">
    <text evidence="4">Phosphorylated by CK2.</text>
</comment>
<comment type="PTM">
    <text evidence="3">N-glycosylated cotranslationally at Asn-217 by STT3A-containing OST-A complex: this glycosylation is constitutive. In response to various stress, 5 additional facultative sites (Asn-62, Asn-107, Asn-445, Asn-481 and Asn-502) can be glycosylated post-translationally by STT3B-containing OST-B complex, leading to a hyperglycosylated form that is degraded by the ER-associated degradation (ERAD) pathway. In normal conditions, the OST-A complex together with CCDC134 prevent glycosylation at facultative sites during protein folding, thereby preventing hyperglycosylation. Mechanistically, nascent HSP90B1 is tethered during translation to a specialized CCDC134-containing translocon that forms a microenvironment for its folding, in which STT3A associates with the SRT pseudosubstrate motif, and prevents access to facultative glycosylation sites until folding is completed, rendering its facultative sites inaccessible to the OST-B complex.</text>
</comment>
<comment type="similarity">
    <text evidence="8">Belongs to the heat shock protein 90 family.</text>
</comment>
<name>ENPL_MACFA</name>
<sequence>MRALWVLGLCCVLLTFGSVRADDEVDVDGTVEEDLGKSREGSRTDDEVVQREEEAIQLDGLNASQIRELREKSEKFAFQAEVNRMMKLIINSLYKNKEIFLRELISNASDALDKIRLISLTDENALSGNEELTVKIKCDKEKNLLHVTDTGVGMTREELVKNLGTIAKSGTSEFLNKMTEAQEDGQSTSELIGQFGVGFYSAFLVADKVIVTSKHNNDTQHIWESDSNEFSVIADPRGNTLGRGTTITLVLKEEASDYLELDTIKNLVKKYSQFINFPIYVWSSKTETVEEPMEEEEAAKEEKEESDDEAAVEEEEEEKKPKTKKVEKTVWDWELMNDIKPIWQRPSKEVEEDEYKAFYKSFSKESDDPMAYIHFTAEGEVTFKSILFVPTSAPRGLFDEYGSKKSDYIKLYVRRVFITDDFHDMMPKYLNFVKGVVDSDDLPLNVSRETLQQHKLLKVIRKKLVRKTLDMIKKIADDKYNDTFWKEFGTNIKLGVIEDHSNRTRLAKLLRFQSSHHPTDITSLDQYVERMKEKQDKIYFMAGSSRKEAESSPFVERLLKKGYEVIYLTEPVDEYCIQALPEFDGKRFQNVAKEGVKFDESEKTKESREAVEKEFEPLLNWMKDKALKDKIEKAVVSQRLTESPCALVASQYGWSGNMERIMKAQAYQTGKDISTNYYASQKKTFEINPRHPLIRDMLRRIKEDEDDKTVLDLAVVLFETATLRSGYLLPDTKAYGDRIERMLRLSLNIDPDAKVEDEPEEEPEETTEDTTEDTEQDEDEEMDVGTDEEEQETAKESTAEKDEL</sequence>